<proteinExistence type="evidence at transcript level"/>
<organism>
    <name type="scientific">Arabidopsis thaliana</name>
    <name type="common">Mouse-ear cress</name>
    <dbReference type="NCBI Taxonomy" id="3702"/>
    <lineage>
        <taxon>Eukaryota</taxon>
        <taxon>Viridiplantae</taxon>
        <taxon>Streptophyta</taxon>
        <taxon>Embryophyta</taxon>
        <taxon>Tracheophyta</taxon>
        <taxon>Spermatophyta</taxon>
        <taxon>Magnoliopsida</taxon>
        <taxon>eudicotyledons</taxon>
        <taxon>Gunneridae</taxon>
        <taxon>Pentapetalae</taxon>
        <taxon>rosids</taxon>
        <taxon>malvids</taxon>
        <taxon>Brassicales</taxon>
        <taxon>Brassicaceae</taxon>
        <taxon>Camelineae</taxon>
        <taxon>Arabidopsis</taxon>
    </lineage>
</organism>
<dbReference type="EC" id="2.7.6.1"/>
<dbReference type="EMBL" id="AC005314">
    <property type="protein sequence ID" value="AAC36182.1"/>
    <property type="status" value="ALT_SEQ"/>
    <property type="molecule type" value="Genomic_DNA"/>
</dbReference>
<dbReference type="EMBL" id="CP002685">
    <property type="protein sequence ID" value="AEC09103.1"/>
    <property type="molecule type" value="Genomic_DNA"/>
</dbReference>
<dbReference type="EMBL" id="CP002685">
    <property type="protein sequence ID" value="AEC09104.1"/>
    <property type="molecule type" value="Genomic_DNA"/>
</dbReference>
<dbReference type="EMBL" id="CP002685">
    <property type="protein sequence ID" value="ANM62892.1"/>
    <property type="molecule type" value="Genomic_DNA"/>
</dbReference>
<dbReference type="EMBL" id="BT002515">
    <property type="protein sequence ID" value="AAO00875.1"/>
    <property type="molecule type" value="mRNA"/>
</dbReference>
<dbReference type="EMBL" id="AY261787">
    <property type="protein sequence ID" value="AAP21681.1"/>
    <property type="molecule type" value="mRNA"/>
</dbReference>
<dbReference type="EMBL" id="AK175326">
    <property type="protein sequence ID" value="BAD43089.1"/>
    <property type="molecule type" value="mRNA"/>
</dbReference>
<dbReference type="EMBL" id="AK175885">
    <property type="protein sequence ID" value="BAD43648.1"/>
    <property type="molecule type" value="mRNA"/>
</dbReference>
<dbReference type="EMBL" id="AK175907">
    <property type="protein sequence ID" value="BAD43670.1"/>
    <property type="molecule type" value="mRNA"/>
</dbReference>
<dbReference type="EMBL" id="AK176491">
    <property type="protein sequence ID" value="BAD44254.1"/>
    <property type="molecule type" value="mRNA"/>
</dbReference>
<dbReference type="EMBL" id="AK176555">
    <property type="protein sequence ID" value="BAD44318.1"/>
    <property type="molecule type" value="mRNA"/>
</dbReference>
<dbReference type="EMBL" id="AK176801">
    <property type="protein sequence ID" value="BAD44564.1"/>
    <property type="molecule type" value="mRNA"/>
</dbReference>
<dbReference type="EMBL" id="AY773861">
    <property type="protein sequence ID" value="AAV63890.1"/>
    <property type="molecule type" value="mRNA"/>
</dbReference>
<dbReference type="EMBL" id="X83764">
    <property type="protein sequence ID" value="CAA58717.1"/>
    <property type="status" value="ALT_INIT"/>
    <property type="molecule type" value="mRNA"/>
</dbReference>
<dbReference type="PIR" id="S51270">
    <property type="entry name" value="S51270"/>
</dbReference>
<dbReference type="RefSeq" id="NP_001325018.1">
    <molecule id="Q42581-2"/>
    <property type="nucleotide sequence ID" value="NM_001336555.1"/>
</dbReference>
<dbReference type="RefSeq" id="NP_181082.1">
    <molecule id="Q42581-2"/>
    <property type="nucleotide sequence ID" value="NM_129091.4"/>
</dbReference>
<dbReference type="RefSeq" id="NP_850244.1">
    <molecule id="Q42581-1"/>
    <property type="nucleotide sequence ID" value="NM_179913.3"/>
</dbReference>
<dbReference type="SMR" id="Q42581"/>
<dbReference type="BioGRID" id="3452">
    <property type="interactions" value="34"/>
</dbReference>
<dbReference type="FunCoup" id="Q42581">
    <property type="interactions" value="2613"/>
</dbReference>
<dbReference type="IntAct" id="Q42581">
    <property type="interactions" value="1"/>
</dbReference>
<dbReference type="STRING" id="3702.Q42581"/>
<dbReference type="PaxDb" id="3702-AT2G35390.2"/>
<dbReference type="ProteomicsDB" id="237048">
    <molecule id="Q42581-1"/>
</dbReference>
<dbReference type="EnsemblPlants" id="AT2G35390.1">
    <molecule id="Q42581-2"/>
    <property type="protein sequence ID" value="AT2G35390.1"/>
    <property type="gene ID" value="AT2G35390"/>
</dbReference>
<dbReference type="EnsemblPlants" id="AT2G35390.2">
    <molecule id="Q42581-1"/>
    <property type="protein sequence ID" value="AT2G35390.2"/>
    <property type="gene ID" value="AT2G35390"/>
</dbReference>
<dbReference type="EnsemblPlants" id="AT2G35390.4">
    <molecule id="Q42581-2"/>
    <property type="protein sequence ID" value="AT2G35390.4"/>
    <property type="gene ID" value="AT2G35390"/>
</dbReference>
<dbReference type="GeneID" id="818106"/>
<dbReference type="Gramene" id="AT2G35390.1">
    <molecule id="Q42581-2"/>
    <property type="protein sequence ID" value="AT2G35390.1"/>
    <property type="gene ID" value="AT2G35390"/>
</dbReference>
<dbReference type="Gramene" id="AT2G35390.2">
    <molecule id="Q42581-1"/>
    <property type="protein sequence ID" value="AT2G35390.2"/>
    <property type="gene ID" value="AT2G35390"/>
</dbReference>
<dbReference type="Gramene" id="AT2G35390.4">
    <molecule id="Q42581-2"/>
    <property type="protein sequence ID" value="AT2G35390.4"/>
    <property type="gene ID" value="AT2G35390"/>
</dbReference>
<dbReference type="KEGG" id="ath:AT2G35390"/>
<dbReference type="Araport" id="AT2G35390"/>
<dbReference type="TAIR" id="AT2G35390"/>
<dbReference type="eggNOG" id="KOG1448">
    <property type="taxonomic scope" value="Eukaryota"/>
</dbReference>
<dbReference type="InParanoid" id="Q42581"/>
<dbReference type="OrthoDB" id="413572at2759"/>
<dbReference type="PhylomeDB" id="Q42581"/>
<dbReference type="BioCyc" id="ARA:AT2G35390-MONOMER"/>
<dbReference type="PRO" id="PR:Q42581"/>
<dbReference type="Proteomes" id="UP000006548">
    <property type="component" value="Chromosome 2"/>
</dbReference>
<dbReference type="ExpressionAtlas" id="Q42581">
    <property type="expression patterns" value="baseline and differential"/>
</dbReference>
<dbReference type="GO" id="GO:0009507">
    <property type="term" value="C:chloroplast"/>
    <property type="evidence" value="ECO:0007669"/>
    <property type="project" value="UniProtKB-SubCell"/>
</dbReference>
<dbReference type="GO" id="GO:0005524">
    <property type="term" value="F:ATP binding"/>
    <property type="evidence" value="ECO:0007669"/>
    <property type="project" value="UniProtKB-KW"/>
</dbReference>
<dbReference type="GO" id="GO:0016301">
    <property type="term" value="F:kinase activity"/>
    <property type="evidence" value="ECO:0007669"/>
    <property type="project" value="UniProtKB-KW"/>
</dbReference>
<dbReference type="GO" id="GO:0000287">
    <property type="term" value="F:magnesium ion binding"/>
    <property type="evidence" value="ECO:0007669"/>
    <property type="project" value="InterPro"/>
</dbReference>
<dbReference type="GO" id="GO:0004749">
    <property type="term" value="F:ribose phosphate diphosphokinase activity"/>
    <property type="evidence" value="ECO:0007669"/>
    <property type="project" value="UniProtKB-EC"/>
</dbReference>
<dbReference type="GO" id="GO:0009165">
    <property type="term" value="P:nucleotide biosynthetic process"/>
    <property type="evidence" value="ECO:0007669"/>
    <property type="project" value="UniProtKB-KW"/>
</dbReference>
<dbReference type="GO" id="GO:0009156">
    <property type="term" value="P:ribonucleoside monophosphate biosynthetic process"/>
    <property type="evidence" value="ECO:0007669"/>
    <property type="project" value="InterPro"/>
</dbReference>
<dbReference type="CDD" id="cd06223">
    <property type="entry name" value="PRTases_typeI"/>
    <property type="match status" value="1"/>
</dbReference>
<dbReference type="FunFam" id="3.40.50.2020:FF:000002">
    <property type="entry name" value="Ribose-phosphate pyrophosphokinase"/>
    <property type="match status" value="1"/>
</dbReference>
<dbReference type="FunFam" id="3.40.50.2020:FF:000014">
    <property type="entry name" value="Ribose-phosphate pyrophosphokinase 1"/>
    <property type="match status" value="1"/>
</dbReference>
<dbReference type="Gene3D" id="3.40.50.2020">
    <property type="match status" value="2"/>
</dbReference>
<dbReference type="HAMAP" id="MF_00583_B">
    <property type="entry name" value="RibP_PPkinase_B"/>
    <property type="match status" value="1"/>
</dbReference>
<dbReference type="InterPro" id="IPR000842">
    <property type="entry name" value="PRib_PP_synth_CS"/>
</dbReference>
<dbReference type="InterPro" id="IPR029099">
    <property type="entry name" value="Pribosyltran_N"/>
</dbReference>
<dbReference type="InterPro" id="IPR000836">
    <property type="entry name" value="PRibTrfase_dom"/>
</dbReference>
<dbReference type="InterPro" id="IPR029057">
    <property type="entry name" value="PRTase-like"/>
</dbReference>
<dbReference type="InterPro" id="IPR005946">
    <property type="entry name" value="Rib-P_diPkinase"/>
</dbReference>
<dbReference type="InterPro" id="IPR037515">
    <property type="entry name" value="Rib-P_diPkinase_bac"/>
</dbReference>
<dbReference type="NCBIfam" id="NF002320">
    <property type="entry name" value="PRK01259.1"/>
    <property type="match status" value="1"/>
</dbReference>
<dbReference type="NCBIfam" id="NF002758">
    <property type="entry name" value="PRK02812.1"/>
    <property type="match status" value="1"/>
</dbReference>
<dbReference type="NCBIfam" id="TIGR01251">
    <property type="entry name" value="ribP_PPkin"/>
    <property type="match status" value="1"/>
</dbReference>
<dbReference type="PANTHER" id="PTHR10210">
    <property type="entry name" value="RIBOSE-PHOSPHATE DIPHOSPHOKINASE FAMILY MEMBER"/>
    <property type="match status" value="1"/>
</dbReference>
<dbReference type="PANTHER" id="PTHR10210:SF41">
    <property type="entry name" value="RIBOSE-PHOSPHATE PYROPHOSPHOKINASE 1, CHLOROPLASTIC"/>
    <property type="match status" value="1"/>
</dbReference>
<dbReference type="Pfam" id="PF14572">
    <property type="entry name" value="Pribosyl_synth"/>
    <property type="match status" value="1"/>
</dbReference>
<dbReference type="Pfam" id="PF13793">
    <property type="entry name" value="Pribosyltran_N"/>
    <property type="match status" value="1"/>
</dbReference>
<dbReference type="SMART" id="SM01400">
    <property type="entry name" value="Pribosyltran_N"/>
    <property type="match status" value="1"/>
</dbReference>
<dbReference type="SUPFAM" id="SSF53271">
    <property type="entry name" value="PRTase-like"/>
    <property type="match status" value="1"/>
</dbReference>
<dbReference type="PROSITE" id="PS00114">
    <property type="entry name" value="PRPP_SYNTHASE"/>
    <property type="match status" value="1"/>
</dbReference>
<gene>
    <name type="primary">PRS1</name>
    <name type="ordered locus">At2g35390</name>
    <name type="ORF">T32F12.23</name>
</gene>
<reference key="1">
    <citation type="journal article" date="1999" name="Nature">
        <title>Sequence and analysis of chromosome 2 of the plant Arabidopsis thaliana.</title>
        <authorList>
            <person name="Lin X."/>
            <person name="Kaul S."/>
            <person name="Rounsley S.D."/>
            <person name="Shea T.P."/>
            <person name="Benito M.-I."/>
            <person name="Town C.D."/>
            <person name="Fujii C.Y."/>
            <person name="Mason T.M."/>
            <person name="Bowman C.L."/>
            <person name="Barnstead M.E."/>
            <person name="Feldblyum T.V."/>
            <person name="Buell C.R."/>
            <person name="Ketchum K.A."/>
            <person name="Lee J.J."/>
            <person name="Ronning C.M."/>
            <person name="Koo H.L."/>
            <person name="Moffat K.S."/>
            <person name="Cronin L.A."/>
            <person name="Shen M."/>
            <person name="Pai G."/>
            <person name="Van Aken S."/>
            <person name="Umayam L."/>
            <person name="Tallon L.J."/>
            <person name="Gill J.E."/>
            <person name="Adams M.D."/>
            <person name="Carrera A.J."/>
            <person name="Creasy T.H."/>
            <person name="Goodman H.M."/>
            <person name="Somerville C.R."/>
            <person name="Copenhaver G.P."/>
            <person name="Preuss D."/>
            <person name="Nierman W.C."/>
            <person name="White O."/>
            <person name="Eisen J.A."/>
            <person name="Salzberg S.L."/>
            <person name="Fraser C.M."/>
            <person name="Venter J.C."/>
        </authorList>
    </citation>
    <scope>NUCLEOTIDE SEQUENCE [LARGE SCALE GENOMIC DNA]</scope>
    <source>
        <strain>cv. Columbia</strain>
    </source>
</reference>
<reference key="2">
    <citation type="journal article" date="2017" name="Plant J.">
        <title>Araport11: a complete reannotation of the Arabidopsis thaliana reference genome.</title>
        <authorList>
            <person name="Cheng C.Y."/>
            <person name="Krishnakumar V."/>
            <person name="Chan A.P."/>
            <person name="Thibaud-Nissen F."/>
            <person name="Schobel S."/>
            <person name="Town C.D."/>
        </authorList>
    </citation>
    <scope>GENOME REANNOTATION</scope>
    <source>
        <strain>cv. Columbia</strain>
    </source>
</reference>
<reference key="3">
    <citation type="journal article" date="2003" name="Science">
        <title>Empirical analysis of transcriptional activity in the Arabidopsis genome.</title>
        <authorList>
            <person name="Yamada K."/>
            <person name="Lim J."/>
            <person name="Dale J.M."/>
            <person name="Chen H."/>
            <person name="Shinn P."/>
            <person name="Palm C.J."/>
            <person name="Southwick A.M."/>
            <person name="Wu H.C."/>
            <person name="Kim C.J."/>
            <person name="Nguyen M."/>
            <person name="Pham P.K."/>
            <person name="Cheuk R.F."/>
            <person name="Karlin-Newmann G."/>
            <person name="Liu S.X."/>
            <person name="Lam B."/>
            <person name="Sakano H."/>
            <person name="Wu T."/>
            <person name="Yu G."/>
            <person name="Miranda M."/>
            <person name="Quach H.L."/>
            <person name="Tripp M."/>
            <person name="Chang C.H."/>
            <person name="Lee J.M."/>
            <person name="Toriumi M.J."/>
            <person name="Chan M.M."/>
            <person name="Tang C.C."/>
            <person name="Onodera C.S."/>
            <person name="Deng J.M."/>
            <person name="Akiyama K."/>
            <person name="Ansari Y."/>
            <person name="Arakawa T."/>
            <person name="Banh J."/>
            <person name="Banno F."/>
            <person name="Bowser L."/>
            <person name="Brooks S.Y."/>
            <person name="Carninci P."/>
            <person name="Chao Q."/>
            <person name="Choy N."/>
            <person name="Enju A."/>
            <person name="Goldsmith A.D."/>
            <person name="Gurjal M."/>
            <person name="Hansen N.F."/>
            <person name="Hayashizaki Y."/>
            <person name="Johnson-Hopson C."/>
            <person name="Hsuan V.W."/>
            <person name="Iida K."/>
            <person name="Karnes M."/>
            <person name="Khan S."/>
            <person name="Koesema E."/>
            <person name="Ishida J."/>
            <person name="Jiang P.X."/>
            <person name="Jones T."/>
            <person name="Kawai J."/>
            <person name="Kamiya A."/>
            <person name="Meyers C."/>
            <person name="Nakajima M."/>
            <person name="Narusaka M."/>
            <person name="Seki M."/>
            <person name="Sakurai T."/>
            <person name="Satou M."/>
            <person name="Tamse R."/>
            <person name="Vaysberg M."/>
            <person name="Wallender E.K."/>
            <person name="Wong C."/>
            <person name="Yamamura Y."/>
            <person name="Yuan S."/>
            <person name="Shinozaki K."/>
            <person name="Davis R.W."/>
            <person name="Theologis A."/>
            <person name="Ecker J.R."/>
        </authorList>
    </citation>
    <scope>NUCLEOTIDE SEQUENCE [LARGE SCALE MRNA] (ISOFORM 1)</scope>
    <source>
        <strain>cv. Columbia</strain>
    </source>
</reference>
<reference key="4">
    <citation type="journal article" date="2005" name="Plant Physiol.">
        <title>Analysis of the cDNAs of hypothetical genes on Arabidopsis chromosome 2 reveals numerous transcript variants.</title>
        <authorList>
            <person name="Xiao Y.-L."/>
            <person name="Smith S.R."/>
            <person name="Ishmael N."/>
            <person name="Redman J.C."/>
            <person name="Kumar N."/>
            <person name="Monaghan E.L."/>
            <person name="Ayele M."/>
            <person name="Haas B.J."/>
            <person name="Wu H.C."/>
            <person name="Town C.D."/>
        </authorList>
    </citation>
    <scope>NUCLEOTIDE SEQUENCE [LARGE SCALE MRNA] (ISOFORM 1)</scope>
    <source>
        <strain>cv. Columbia</strain>
    </source>
</reference>
<reference key="5">
    <citation type="submission" date="2004-09" db="EMBL/GenBank/DDBJ databases">
        <title>Large-scale analysis of RIKEN Arabidopsis full-length (RAFL) cDNAs.</title>
        <authorList>
            <person name="Totoki Y."/>
            <person name="Seki M."/>
            <person name="Ishida J."/>
            <person name="Nakajima M."/>
            <person name="Enju A."/>
            <person name="Kamiya A."/>
            <person name="Narusaka M."/>
            <person name="Shin-i T."/>
            <person name="Nakagawa M."/>
            <person name="Sakamoto N."/>
            <person name="Oishi K."/>
            <person name="Kohara Y."/>
            <person name="Kobayashi M."/>
            <person name="Toyoda A."/>
            <person name="Sakaki Y."/>
            <person name="Sakurai T."/>
            <person name="Iida K."/>
            <person name="Akiyama K."/>
            <person name="Satou M."/>
            <person name="Toyoda T."/>
            <person name="Konagaya A."/>
            <person name="Carninci P."/>
            <person name="Kawai J."/>
            <person name="Hayashizaki Y."/>
            <person name="Shinozaki K."/>
        </authorList>
    </citation>
    <scope>NUCLEOTIDE SEQUENCE [LARGE SCALE MRNA] (ISOFORMS 1 AND 2)</scope>
    <source>
        <strain>cv. Columbia</strain>
    </source>
</reference>
<reference key="6">
    <citation type="submission" date="2004-10" db="EMBL/GenBank/DDBJ databases">
        <authorList>
            <person name="Underwood B.A."/>
            <person name="Xiao Y.-L."/>
            <person name="Moskal W.A. Jr."/>
            <person name="Monaghan E.L."/>
            <person name="Wang W."/>
            <person name="Redman J.C."/>
            <person name="Wu H.C."/>
            <person name="Utterback T."/>
            <person name="Town C.D."/>
        </authorList>
    </citation>
    <scope>NUCLEOTIDE SEQUENCE [LARGE SCALE MRNA] (ISOFORM 1)</scope>
    <source>
        <strain>cv. Columbia</strain>
    </source>
</reference>
<reference key="7">
    <citation type="journal article" date="1999" name="Biochim. Biophys. Acta">
        <title>Cloning and sequencing of cDNAs specifying a novel class of phosphoribosyl diphosphate synthase in Arabidopsis thaliana.</title>
        <authorList>
            <person name="Krath B.N."/>
            <person name="Eriksen T.A."/>
            <person name="Poulsen T.S."/>
            <person name="Hove-Jensen B."/>
        </authorList>
    </citation>
    <scope>NUCLEOTIDE SEQUENCE [MRNA] OF 41-403 (ISOFORM 1)</scope>
    <source>
        <strain>cv. Columbia</strain>
    </source>
</reference>
<evidence type="ECO:0000250" key="1"/>
<evidence type="ECO:0000255" key="2"/>
<evidence type="ECO:0000303" key="3">
    <source ref="5"/>
</evidence>
<evidence type="ECO:0000305" key="4"/>
<comment type="catalytic activity">
    <reaction>
        <text>D-ribose 5-phosphate + ATP = 5-phospho-alpha-D-ribose 1-diphosphate + AMP + H(+)</text>
        <dbReference type="Rhea" id="RHEA:15609"/>
        <dbReference type="ChEBI" id="CHEBI:15378"/>
        <dbReference type="ChEBI" id="CHEBI:30616"/>
        <dbReference type="ChEBI" id="CHEBI:58017"/>
        <dbReference type="ChEBI" id="CHEBI:78346"/>
        <dbReference type="ChEBI" id="CHEBI:456215"/>
        <dbReference type="EC" id="2.7.6.1"/>
    </reaction>
</comment>
<comment type="cofactor">
    <cofactor evidence="1">
        <name>Mg(2+)</name>
        <dbReference type="ChEBI" id="CHEBI:18420"/>
    </cofactor>
    <text evidence="1">Binds 1 Mg(2+) ion per subunit.</text>
</comment>
<comment type="subcellular location">
    <subcellularLocation>
        <location evidence="4">Plastid</location>
        <location evidence="4">Chloroplast</location>
    </subcellularLocation>
</comment>
<comment type="alternative products">
    <event type="alternative splicing"/>
    <isoform>
        <id>Q42581-1</id>
        <name>1</name>
        <sequence type="displayed"/>
    </isoform>
    <isoform>
        <id>Q42581-2</id>
        <name>2</name>
        <sequence type="described" ref="VSP_013267"/>
    </isoform>
</comment>
<comment type="miscellaneous">
    <molecule>Isoform 2</molecule>
    <text evidence="4">May be due to an intron retention.</text>
</comment>
<comment type="similarity">
    <text evidence="4">Belongs to the ribose-phosphate pyrophosphokinase family.</text>
</comment>
<comment type="sequence caution" evidence="4">
    <conflict type="erroneous gene model prediction">
        <sequence resource="EMBL-CDS" id="AAC36182"/>
    </conflict>
</comment>
<comment type="sequence caution" evidence="4">
    <conflict type="erroneous initiation">
        <sequence resource="EMBL-CDS" id="CAA58717"/>
    </conflict>
</comment>
<protein>
    <recommendedName>
        <fullName>Ribose-phosphate pyrophosphokinase 1, chloroplastic</fullName>
        <ecNumber>2.7.6.1</ecNumber>
    </recommendedName>
    <alternativeName>
        <fullName>PRS I</fullName>
    </alternativeName>
    <alternativeName>
        <fullName>Phosphoribosyl pyrophosphate synthase 1</fullName>
    </alternativeName>
</protein>
<keyword id="KW-0025">Alternative splicing</keyword>
<keyword id="KW-0067">ATP-binding</keyword>
<keyword id="KW-0150">Chloroplast</keyword>
<keyword id="KW-0418">Kinase</keyword>
<keyword id="KW-0460">Magnesium</keyword>
<keyword id="KW-0479">Metal-binding</keyword>
<keyword id="KW-0545">Nucleotide biosynthesis</keyword>
<keyword id="KW-0547">Nucleotide-binding</keyword>
<keyword id="KW-0934">Plastid</keyword>
<keyword id="KW-1185">Reference proteome</keyword>
<keyword id="KW-0808">Transferase</keyword>
<keyword id="KW-0809">Transit peptide</keyword>
<sequence length="403" mass="43695">MASLGLSFPPAAKTPTYLASSSSTFFSNSSLSVRTSQFRSRNSVFACVKCDMPESLNVGNGNPSIPIINERTLPKFLESARMEKSVNRTNTRLKLFSGTANPALAQEIAWYMGLDLGKVNIKRFADGEIYVQLQESVRGCDVYLVQPTCTPTNENLMELLIMVDACRRASAKKVTAVIPYFGYARADRKTQGRESIAAKLVANLITEAGADRVLACDLHSGQSMGYFDIPVDHVYCQPVILDYLASKSIPSEDLVVVSPDVGGVARARAFAKKLSDAPLAIVDKRRSGHNVAEVMNLIGDVRGKVAIMVDDMIDTAGTIVKGAALLHQEGAREVYACCTHAVFSPPAIERLSGGLLQEVIVTNTLPVAEKNYFPQLTILSVANLLGETIWRVHDDSSVSSIFL</sequence>
<name>KPRS1_ARATH</name>
<accession>Q42581</accession>
<accession>Q67XL7</accession>
<accession>Q67YH7</accession>
<accession>Q84LR8</accession>
<accession>Q8GUH0</accession>
<feature type="transit peptide" description="Chloroplast" evidence="2">
    <location>
        <begin position="1"/>
        <end position="49"/>
    </location>
</feature>
<feature type="chain" id="PRO_0000141092" description="Ribose-phosphate pyrophosphokinase 1, chloroplastic">
    <location>
        <begin position="50"/>
        <end position="403"/>
    </location>
</feature>
<feature type="region of interest" description="Binding of phosphoribosylpyrophosphate" evidence="2">
    <location>
        <begin position="303"/>
        <end position="318"/>
    </location>
</feature>
<feature type="binding site" evidence="2">
    <location>
        <position position="217"/>
    </location>
    <ligand>
        <name>Mg(2+)</name>
        <dbReference type="ChEBI" id="CHEBI:18420"/>
    </ligand>
</feature>
<feature type="binding site" evidence="2">
    <location>
        <position position="219"/>
    </location>
    <ligand>
        <name>Mg(2+)</name>
        <dbReference type="ChEBI" id="CHEBI:18420"/>
    </ligand>
</feature>
<feature type="binding site" evidence="2">
    <location>
        <position position="228"/>
    </location>
    <ligand>
        <name>Mg(2+)</name>
        <dbReference type="ChEBI" id="CHEBI:18420"/>
    </ligand>
</feature>
<feature type="binding site" evidence="2">
    <location>
        <position position="232"/>
    </location>
    <ligand>
        <name>Mg(2+)</name>
        <dbReference type="ChEBI" id="CHEBI:18420"/>
    </ligand>
</feature>
<feature type="splice variant" id="VSP_013267" description="In isoform 2." evidence="3">
    <location>
        <begin position="1"/>
        <end position="51"/>
    </location>
</feature>
<feature type="sequence conflict" description="In Ref. 5; BAD44564." evidence="4" ref="5">
    <original>I</original>
    <variation>T</variation>
    <location>
        <position position="178"/>
    </location>
</feature>
<feature type="sequence conflict" description="In Ref. 3; AAO00875." evidence="4" ref="3">
    <original>E</original>
    <variation>K</variation>
    <location>
        <position position="194"/>
    </location>
</feature>